<evidence type="ECO:0000255" key="1">
    <source>
        <dbReference type="HAMAP-Rule" id="MF_01058"/>
    </source>
</evidence>
<evidence type="ECO:0000256" key="2">
    <source>
        <dbReference type="SAM" id="MobiDB-lite"/>
    </source>
</evidence>
<gene>
    <name evidence="1" type="primary">yihI</name>
    <name type="ordered locus">YpAngola_A0025</name>
</gene>
<sequence>MKQPNKAPRANIAAPKGTATPKRRRKTRDELDAEARDRKRQKKHSGNRSGARTNVEGSNKKGHSQTQEKDPRVGSKVPVPLVIESQVKAKSMPKPVEKNVVKPRLTPEEELAKLENDERLDALLDRLDNDEVLNKEDQAYVDLTLDRIDALMEQLGIELGDDEDDVEREEKQEDILQLLKRGNPKDTF</sequence>
<keyword id="KW-0343">GTPase activation</keyword>
<keyword id="KW-0690">Ribosome biogenesis</keyword>
<dbReference type="EMBL" id="CP000901">
    <property type="protein sequence ID" value="ABX86861.1"/>
    <property type="molecule type" value="Genomic_DNA"/>
</dbReference>
<dbReference type="RefSeq" id="WP_002213158.1">
    <property type="nucleotide sequence ID" value="NZ_CP009935.1"/>
</dbReference>
<dbReference type="SMR" id="A9QYI1"/>
<dbReference type="GeneID" id="57974569"/>
<dbReference type="KEGG" id="ypg:YpAngola_A0025"/>
<dbReference type="PATRIC" id="fig|349746.12.peg.969"/>
<dbReference type="GO" id="GO:0005096">
    <property type="term" value="F:GTPase activator activity"/>
    <property type="evidence" value="ECO:0007669"/>
    <property type="project" value="UniProtKB-KW"/>
</dbReference>
<dbReference type="GO" id="GO:0042254">
    <property type="term" value="P:ribosome biogenesis"/>
    <property type="evidence" value="ECO:0007669"/>
    <property type="project" value="UniProtKB-KW"/>
</dbReference>
<dbReference type="HAMAP" id="MF_01058">
    <property type="entry name" value="GAP_YihI"/>
    <property type="match status" value="1"/>
</dbReference>
<dbReference type="InterPro" id="IPR007336">
    <property type="entry name" value="YihI"/>
</dbReference>
<dbReference type="NCBIfam" id="NF003560">
    <property type="entry name" value="PRK05244.1-1"/>
    <property type="match status" value="1"/>
</dbReference>
<dbReference type="Pfam" id="PF04220">
    <property type="entry name" value="YihI"/>
    <property type="match status" value="1"/>
</dbReference>
<organism>
    <name type="scientific">Yersinia pestis bv. Antiqua (strain Angola)</name>
    <dbReference type="NCBI Taxonomy" id="349746"/>
    <lineage>
        <taxon>Bacteria</taxon>
        <taxon>Pseudomonadati</taxon>
        <taxon>Pseudomonadota</taxon>
        <taxon>Gammaproteobacteria</taxon>
        <taxon>Enterobacterales</taxon>
        <taxon>Yersiniaceae</taxon>
        <taxon>Yersinia</taxon>
    </lineage>
</organism>
<protein>
    <recommendedName>
        <fullName evidence="1">Der GTPase-activating protein YihI</fullName>
    </recommendedName>
</protein>
<accession>A9QYI1</accession>
<name>YIHI_YERPG</name>
<reference key="1">
    <citation type="journal article" date="2010" name="J. Bacteriol.">
        <title>Genome sequence of the deep-rooted Yersinia pestis strain Angola reveals new insights into the evolution and pangenome of the plague bacterium.</title>
        <authorList>
            <person name="Eppinger M."/>
            <person name="Worsham P.L."/>
            <person name="Nikolich M.P."/>
            <person name="Riley D.R."/>
            <person name="Sebastian Y."/>
            <person name="Mou S."/>
            <person name="Achtman M."/>
            <person name="Lindler L.E."/>
            <person name="Ravel J."/>
        </authorList>
    </citation>
    <scope>NUCLEOTIDE SEQUENCE [LARGE SCALE GENOMIC DNA]</scope>
    <source>
        <strain>Angola</strain>
    </source>
</reference>
<proteinExistence type="inferred from homology"/>
<comment type="function">
    <text evidence="1">A GTPase-activating protein (GAP) that modifies Der/EngA GTPase function. May play a role in ribosome biogenesis.</text>
</comment>
<comment type="subunit">
    <text evidence="1">Interacts with Der.</text>
</comment>
<comment type="similarity">
    <text evidence="1">Belongs to the YihI family.</text>
</comment>
<feature type="chain" id="PRO_1000136397" description="Der GTPase-activating protein YihI">
    <location>
        <begin position="1"/>
        <end position="188"/>
    </location>
</feature>
<feature type="region of interest" description="Disordered" evidence="2">
    <location>
        <begin position="1"/>
        <end position="80"/>
    </location>
</feature>
<feature type="region of interest" description="Disordered" evidence="2">
    <location>
        <begin position="162"/>
        <end position="188"/>
    </location>
</feature>
<feature type="compositionally biased region" description="Basic and acidic residues" evidence="2">
    <location>
        <begin position="27"/>
        <end position="37"/>
    </location>
</feature>
<feature type="compositionally biased region" description="Polar residues" evidence="2">
    <location>
        <begin position="47"/>
        <end position="57"/>
    </location>
</feature>